<feature type="chain" id="PRO_1000199493" description="Serine--tRNA ligase">
    <location>
        <begin position="1"/>
        <end position="461"/>
    </location>
</feature>
<feature type="region of interest" description="Disordered" evidence="2">
    <location>
        <begin position="112"/>
        <end position="134"/>
    </location>
</feature>
<feature type="compositionally biased region" description="Basic and acidic residues" evidence="2">
    <location>
        <begin position="114"/>
        <end position="134"/>
    </location>
</feature>
<feature type="binding site" evidence="1">
    <location>
        <begin position="252"/>
        <end position="254"/>
    </location>
    <ligand>
        <name>L-serine</name>
        <dbReference type="ChEBI" id="CHEBI:33384"/>
    </ligand>
</feature>
<feature type="binding site" evidence="1">
    <location>
        <begin position="283"/>
        <end position="285"/>
    </location>
    <ligand>
        <name>ATP</name>
        <dbReference type="ChEBI" id="CHEBI:30616"/>
    </ligand>
</feature>
<feature type="binding site" evidence="1">
    <location>
        <position position="306"/>
    </location>
    <ligand>
        <name>L-serine</name>
        <dbReference type="ChEBI" id="CHEBI:33384"/>
    </ligand>
</feature>
<feature type="binding site" evidence="1">
    <location>
        <begin position="370"/>
        <end position="373"/>
    </location>
    <ligand>
        <name>ATP</name>
        <dbReference type="ChEBI" id="CHEBI:30616"/>
    </ligand>
</feature>
<feature type="binding site" evidence="1">
    <location>
        <position position="406"/>
    </location>
    <ligand>
        <name>L-serine</name>
        <dbReference type="ChEBI" id="CHEBI:33384"/>
    </ligand>
</feature>
<proteinExistence type="inferred from homology"/>
<sequence>MYDIKWIRDNPEVFDQGRKRRGLEPLAARLLELDDARRGAIAKLQVAQERRNAASKEIGQAMAAKDQAKADALMAEVSALKRDLPELEAAERAAAALLDKALSEIPNLPLEEVPFGRDENDNREHHTFGEKPRFSFDPAEHYELGETLGLMDFETAAKLSGARFVVNKGPLARLERALGAFMLDLHTGEHGYTEVNPPILVRDDAMFGTAQLPKFENDQFWARPGAHPLLIDMFGREEAEEMKKNRLWLIPTAEVPLTNLVRESILDEKQLPLRFTASTPCFRAEAGSAGRDTRGMIRQHQFTKVELVSITTPEQALAEHERMLSCAEEVLKRLKLPYRVVTLCTGDMGFASQKTYDIEVWLPGQDRYREISSVSVCGDFQARRMNARYRPEGAKNTRFVHTLNGSGVAVGRALVAVLENYQTEDGSIIVPDALAPYMGGITRIEKPALERPNSEKPVSRA</sequence>
<organism>
    <name type="scientific">Methylocella silvestris (strain DSM 15510 / CIP 108128 / LMG 27833 / NCIMB 13906 / BL2)</name>
    <dbReference type="NCBI Taxonomy" id="395965"/>
    <lineage>
        <taxon>Bacteria</taxon>
        <taxon>Pseudomonadati</taxon>
        <taxon>Pseudomonadota</taxon>
        <taxon>Alphaproteobacteria</taxon>
        <taxon>Hyphomicrobiales</taxon>
        <taxon>Beijerinckiaceae</taxon>
        <taxon>Methylocella</taxon>
    </lineage>
</organism>
<comment type="function">
    <text evidence="1">Catalyzes the attachment of serine to tRNA(Ser). Is also able to aminoacylate tRNA(Sec) with serine, to form the misacylated tRNA L-seryl-tRNA(Sec), which will be further converted into selenocysteinyl-tRNA(Sec).</text>
</comment>
<comment type="catalytic activity">
    <reaction evidence="1">
        <text>tRNA(Ser) + L-serine + ATP = L-seryl-tRNA(Ser) + AMP + diphosphate + H(+)</text>
        <dbReference type="Rhea" id="RHEA:12292"/>
        <dbReference type="Rhea" id="RHEA-COMP:9669"/>
        <dbReference type="Rhea" id="RHEA-COMP:9703"/>
        <dbReference type="ChEBI" id="CHEBI:15378"/>
        <dbReference type="ChEBI" id="CHEBI:30616"/>
        <dbReference type="ChEBI" id="CHEBI:33019"/>
        <dbReference type="ChEBI" id="CHEBI:33384"/>
        <dbReference type="ChEBI" id="CHEBI:78442"/>
        <dbReference type="ChEBI" id="CHEBI:78533"/>
        <dbReference type="ChEBI" id="CHEBI:456215"/>
        <dbReference type="EC" id="6.1.1.11"/>
    </reaction>
</comment>
<comment type="catalytic activity">
    <reaction evidence="1">
        <text>tRNA(Sec) + L-serine + ATP = L-seryl-tRNA(Sec) + AMP + diphosphate + H(+)</text>
        <dbReference type="Rhea" id="RHEA:42580"/>
        <dbReference type="Rhea" id="RHEA-COMP:9742"/>
        <dbReference type="Rhea" id="RHEA-COMP:10128"/>
        <dbReference type="ChEBI" id="CHEBI:15378"/>
        <dbReference type="ChEBI" id="CHEBI:30616"/>
        <dbReference type="ChEBI" id="CHEBI:33019"/>
        <dbReference type="ChEBI" id="CHEBI:33384"/>
        <dbReference type="ChEBI" id="CHEBI:78442"/>
        <dbReference type="ChEBI" id="CHEBI:78533"/>
        <dbReference type="ChEBI" id="CHEBI:456215"/>
        <dbReference type="EC" id="6.1.1.11"/>
    </reaction>
</comment>
<comment type="pathway">
    <text evidence="1">Aminoacyl-tRNA biosynthesis; selenocysteinyl-tRNA(Sec) biosynthesis; L-seryl-tRNA(Sec) from L-serine and tRNA(Sec): step 1/1.</text>
</comment>
<comment type="subunit">
    <text evidence="1">Homodimer. The tRNA molecule binds across the dimer.</text>
</comment>
<comment type="subcellular location">
    <subcellularLocation>
        <location evidence="1">Cytoplasm</location>
    </subcellularLocation>
</comment>
<comment type="domain">
    <text evidence="1">Consists of two distinct domains, a catalytic core and a N-terminal extension that is involved in tRNA binding.</text>
</comment>
<comment type="similarity">
    <text evidence="1">Belongs to the class-II aminoacyl-tRNA synthetase family. Type-1 seryl-tRNA synthetase subfamily.</text>
</comment>
<keyword id="KW-0030">Aminoacyl-tRNA synthetase</keyword>
<keyword id="KW-0067">ATP-binding</keyword>
<keyword id="KW-0963">Cytoplasm</keyword>
<keyword id="KW-0436">Ligase</keyword>
<keyword id="KW-0547">Nucleotide-binding</keyword>
<keyword id="KW-0648">Protein biosynthesis</keyword>
<keyword id="KW-1185">Reference proteome</keyword>
<evidence type="ECO:0000255" key="1">
    <source>
        <dbReference type="HAMAP-Rule" id="MF_00176"/>
    </source>
</evidence>
<evidence type="ECO:0000256" key="2">
    <source>
        <dbReference type="SAM" id="MobiDB-lite"/>
    </source>
</evidence>
<protein>
    <recommendedName>
        <fullName evidence="1">Serine--tRNA ligase</fullName>
        <ecNumber evidence="1">6.1.1.11</ecNumber>
    </recommendedName>
    <alternativeName>
        <fullName evidence="1">Seryl-tRNA synthetase</fullName>
        <shortName evidence="1">SerRS</shortName>
    </alternativeName>
    <alternativeName>
        <fullName evidence="1">Seryl-tRNA(Ser/Sec) synthetase</fullName>
    </alternativeName>
</protein>
<dbReference type="EC" id="6.1.1.11" evidence="1"/>
<dbReference type="EMBL" id="CP001280">
    <property type="protein sequence ID" value="ACK49558.1"/>
    <property type="molecule type" value="Genomic_DNA"/>
</dbReference>
<dbReference type="RefSeq" id="WP_012589628.1">
    <property type="nucleotide sequence ID" value="NC_011666.1"/>
</dbReference>
<dbReference type="SMR" id="B8ELG9"/>
<dbReference type="STRING" id="395965.Msil_0586"/>
<dbReference type="KEGG" id="msl:Msil_0586"/>
<dbReference type="eggNOG" id="COG0172">
    <property type="taxonomic scope" value="Bacteria"/>
</dbReference>
<dbReference type="HOGENOM" id="CLU_023797_0_1_5"/>
<dbReference type="OrthoDB" id="9804647at2"/>
<dbReference type="UniPathway" id="UPA00906">
    <property type="reaction ID" value="UER00895"/>
</dbReference>
<dbReference type="Proteomes" id="UP000002257">
    <property type="component" value="Chromosome"/>
</dbReference>
<dbReference type="GO" id="GO:0005737">
    <property type="term" value="C:cytoplasm"/>
    <property type="evidence" value="ECO:0007669"/>
    <property type="project" value="UniProtKB-SubCell"/>
</dbReference>
<dbReference type="GO" id="GO:0005524">
    <property type="term" value="F:ATP binding"/>
    <property type="evidence" value="ECO:0007669"/>
    <property type="project" value="UniProtKB-UniRule"/>
</dbReference>
<dbReference type="GO" id="GO:0004828">
    <property type="term" value="F:serine-tRNA ligase activity"/>
    <property type="evidence" value="ECO:0007669"/>
    <property type="project" value="UniProtKB-UniRule"/>
</dbReference>
<dbReference type="GO" id="GO:0016260">
    <property type="term" value="P:selenocysteine biosynthetic process"/>
    <property type="evidence" value="ECO:0007669"/>
    <property type="project" value="UniProtKB-UniRule"/>
</dbReference>
<dbReference type="GO" id="GO:0006434">
    <property type="term" value="P:seryl-tRNA aminoacylation"/>
    <property type="evidence" value="ECO:0007669"/>
    <property type="project" value="UniProtKB-UniRule"/>
</dbReference>
<dbReference type="CDD" id="cd00770">
    <property type="entry name" value="SerRS_core"/>
    <property type="match status" value="1"/>
</dbReference>
<dbReference type="Gene3D" id="3.30.930.10">
    <property type="entry name" value="Bira Bifunctional Protein, Domain 2"/>
    <property type="match status" value="1"/>
</dbReference>
<dbReference type="Gene3D" id="1.10.287.40">
    <property type="entry name" value="Serine-tRNA synthetase, tRNA binding domain"/>
    <property type="match status" value="1"/>
</dbReference>
<dbReference type="HAMAP" id="MF_00176">
    <property type="entry name" value="Ser_tRNA_synth_type1"/>
    <property type="match status" value="1"/>
</dbReference>
<dbReference type="InterPro" id="IPR002314">
    <property type="entry name" value="aa-tRNA-synt_IIb"/>
</dbReference>
<dbReference type="InterPro" id="IPR006195">
    <property type="entry name" value="aa-tRNA-synth_II"/>
</dbReference>
<dbReference type="InterPro" id="IPR045864">
    <property type="entry name" value="aa-tRNA-synth_II/BPL/LPL"/>
</dbReference>
<dbReference type="InterPro" id="IPR002317">
    <property type="entry name" value="Ser-tRNA-ligase_type_1"/>
</dbReference>
<dbReference type="InterPro" id="IPR015866">
    <property type="entry name" value="Ser-tRNA-synth_1_N"/>
</dbReference>
<dbReference type="InterPro" id="IPR042103">
    <property type="entry name" value="SerRS_1_N_sf"/>
</dbReference>
<dbReference type="InterPro" id="IPR033729">
    <property type="entry name" value="SerRS_core"/>
</dbReference>
<dbReference type="InterPro" id="IPR010978">
    <property type="entry name" value="tRNA-bd_arm"/>
</dbReference>
<dbReference type="NCBIfam" id="TIGR00414">
    <property type="entry name" value="serS"/>
    <property type="match status" value="1"/>
</dbReference>
<dbReference type="PANTHER" id="PTHR43697:SF1">
    <property type="entry name" value="SERINE--TRNA LIGASE"/>
    <property type="match status" value="1"/>
</dbReference>
<dbReference type="PANTHER" id="PTHR43697">
    <property type="entry name" value="SERYL-TRNA SYNTHETASE"/>
    <property type="match status" value="1"/>
</dbReference>
<dbReference type="Pfam" id="PF02403">
    <property type="entry name" value="Seryl_tRNA_N"/>
    <property type="match status" value="1"/>
</dbReference>
<dbReference type="Pfam" id="PF00587">
    <property type="entry name" value="tRNA-synt_2b"/>
    <property type="match status" value="1"/>
</dbReference>
<dbReference type="PIRSF" id="PIRSF001529">
    <property type="entry name" value="Ser-tRNA-synth_IIa"/>
    <property type="match status" value="1"/>
</dbReference>
<dbReference type="PRINTS" id="PR00981">
    <property type="entry name" value="TRNASYNTHSER"/>
</dbReference>
<dbReference type="SUPFAM" id="SSF55681">
    <property type="entry name" value="Class II aaRS and biotin synthetases"/>
    <property type="match status" value="1"/>
</dbReference>
<dbReference type="SUPFAM" id="SSF46589">
    <property type="entry name" value="tRNA-binding arm"/>
    <property type="match status" value="1"/>
</dbReference>
<dbReference type="PROSITE" id="PS50862">
    <property type="entry name" value="AA_TRNA_LIGASE_II"/>
    <property type="match status" value="1"/>
</dbReference>
<name>SYS_METSB</name>
<reference key="1">
    <citation type="journal article" date="2010" name="J. Bacteriol.">
        <title>Complete genome sequence of the aerobic facultative methanotroph Methylocella silvestris BL2.</title>
        <authorList>
            <person name="Chen Y."/>
            <person name="Crombie A."/>
            <person name="Rahman M.T."/>
            <person name="Dedysh S.N."/>
            <person name="Liesack W."/>
            <person name="Stott M.B."/>
            <person name="Alam M."/>
            <person name="Theisen A.R."/>
            <person name="Murrell J.C."/>
            <person name="Dunfield P.F."/>
        </authorList>
    </citation>
    <scope>NUCLEOTIDE SEQUENCE [LARGE SCALE GENOMIC DNA]</scope>
    <source>
        <strain>DSM 15510 / CIP 108128 / LMG 27833 / NCIMB 13906 / BL2</strain>
    </source>
</reference>
<accession>B8ELG9</accession>
<gene>
    <name evidence="1" type="primary">serS</name>
    <name type="ordered locus">Msil_0586</name>
</gene>